<evidence type="ECO:0000250" key="1">
    <source>
        <dbReference type="UniProtKB" id="P00374"/>
    </source>
</evidence>
<evidence type="ECO:0000250" key="2">
    <source>
        <dbReference type="UniProtKB" id="P00375"/>
    </source>
</evidence>
<evidence type="ECO:0000255" key="3">
    <source>
        <dbReference type="PROSITE-ProRule" id="PRU00660"/>
    </source>
</evidence>
<evidence type="ECO:0000269" key="4">
    <source>
    </source>
</evidence>
<evidence type="ECO:0000305" key="5"/>
<comment type="function">
    <text evidence="1">Key enzyme in folate metabolism. Contributes to the de novo mitochondrial thymidylate biosynthesis pathway. Catalyzes an essential reaction for de novo glycine and purine synthesis, and for DNA precursor synthesis. Binds its own mRNA (By similarity).</text>
</comment>
<comment type="catalytic activity">
    <reaction evidence="3 4">
        <text>(6S)-5,6,7,8-tetrahydrofolate + NADP(+) = 7,8-dihydrofolate + NADPH + H(+)</text>
        <dbReference type="Rhea" id="RHEA:15009"/>
        <dbReference type="ChEBI" id="CHEBI:15378"/>
        <dbReference type="ChEBI" id="CHEBI:57451"/>
        <dbReference type="ChEBI" id="CHEBI:57453"/>
        <dbReference type="ChEBI" id="CHEBI:57783"/>
        <dbReference type="ChEBI" id="CHEBI:58349"/>
        <dbReference type="EC" id="1.5.1.3"/>
    </reaction>
</comment>
<comment type="pathway">
    <text>Cofactor biosynthesis; tetrahydrofolate biosynthesis; 5,6,7,8-tetrahydrofolate from 7,8-dihydrofolate: step 1/1.</text>
</comment>
<comment type="subunit">
    <text evidence="1">Homodimer.</text>
</comment>
<comment type="subcellular location">
    <subcellularLocation>
        <location evidence="4">Mitochondrion</location>
    </subcellularLocation>
    <subcellularLocation>
        <location evidence="4">Cytoplasm</location>
    </subcellularLocation>
</comment>
<comment type="similarity">
    <text evidence="5">Belongs to the dihydrofolate reductase family.</text>
</comment>
<gene>
    <name type="primary">Dhfr</name>
</gene>
<organism>
    <name type="scientific">Rattus norvegicus</name>
    <name type="common">Rat</name>
    <dbReference type="NCBI Taxonomy" id="10116"/>
    <lineage>
        <taxon>Eukaryota</taxon>
        <taxon>Metazoa</taxon>
        <taxon>Chordata</taxon>
        <taxon>Craniata</taxon>
        <taxon>Vertebrata</taxon>
        <taxon>Euteleostomi</taxon>
        <taxon>Mammalia</taxon>
        <taxon>Eutheria</taxon>
        <taxon>Euarchontoglires</taxon>
        <taxon>Glires</taxon>
        <taxon>Rodentia</taxon>
        <taxon>Myomorpha</taxon>
        <taxon>Muroidea</taxon>
        <taxon>Muridae</taxon>
        <taxon>Murinae</taxon>
        <taxon>Rattus</taxon>
    </lineage>
</organism>
<keyword id="KW-0007">Acetylation</keyword>
<keyword id="KW-0963">Cytoplasm</keyword>
<keyword id="KW-0487">Methotrexate resistance</keyword>
<keyword id="KW-0496">Mitochondrion</keyword>
<keyword id="KW-0521">NADP</keyword>
<keyword id="KW-0554">One-carbon metabolism</keyword>
<keyword id="KW-0560">Oxidoreductase</keyword>
<keyword id="KW-1185">Reference proteome</keyword>
<keyword id="KW-0694">RNA-binding</keyword>
<reference key="1">
    <citation type="journal article" date="2001" name="Antimicrob. Agents Chemother.">
        <title>Isolation of rat dihydrofolate reductase gene and characterization of recombinant enzyme.</title>
        <authorList>
            <person name="Wang Y."/>
            <person name="Bruenn J.A."/>
            <person name="Queener S.F."/>
            <person name="Cody V."/>
        </authorList>
    </citation>
    <scope>NUCLEOTIDE SEQUENCE [MRNA]</scope>
    <source>
        <strain>Sprague-Dawley</strain>
        <tissue>Liver</tissue>
    </source>
</reference>
<reference key="2">
    <citation type="journal article" date="2015" name="FEBS Lett.">
        <title>An active second dihydrofolate reductase enzyme is not a feature of rat and mouse, but they do have activity in their mitochondria.</title>
        <authorList>
            <person name="Hughes L."/>
            <person name="Carton R."/>
            <person name="Minguzzi S."/>
            <person name="McEntee G."/>
            <person name="Deinum E.E."/>
            <person name="O'Connell M.J."/>
            <person name="Parle-McDermott A."/>
        </authorList>
    </citation>
    <scope>SUBCELLULAR LOCATION</scope>
    <scope>CATALYTIC ACTIVITY</scope>
</reference>
<name>DYR_RAT</name>
<protein>
    <recommendedName>
        <fullName>Dihydrofolate reductase</fullName>
        <ecNumber>1.5.1.3</ecNumber>
    </recommendedName>
</protein>
<dbReference type="EC" id="1.5.1.3"/>
<dbReference type="EMBL" id="AF318150">
    <property type="protein sequence ID" value="AAL11500.1"/>
    <property type="molecule type" value="mRNA"/>
</dbReference>
<dbReference type="RefSeq" id="NP_569084.1">
    <property type="nucleotide sequence ID" value="NM_130400.2"/>
</dbReference>
<dbReference type="SMR" id="Q920D2"/>
<dbReference type="CORUM" id="Q920D2"/>
<dbReference type="FunCoup" id="Q920D2">
    <property type="interactions" value="642"/>
</dbReference>
<dbReference type="STRING" id="10116.ENSRNOP00000018259"/>
<dbReference type="BindingDB" id="Q920D2"/>
<dbReference type="ChEMBL" id="CHEMBL2363"/>
<dbReference type="DrugCentral" id="Q920D2"/>
<dbReference type="iPTMnet" id="Q920D2"/>
<dbReference type="PhosphoSitePlus" id="Q920D2"/>
<dbReference type="jPOST" id="Q920D2"/>
<dbReference type="PaxDb" id="10116-ENSRNOP00000018259"/>
<dbReference type="Ensembl" id="ENSRNOT00000018259.6">
    <property type="protein sequence ID" value="ENSRNOP00000018259.3"/>
    <property type="gene ID" value="ENSRNOG00000013521.6"/>
</dbReference>
<dbReference type="GeneID" id="24312"/>
<dbReference type="KEGG" id="rno:24312"/>
<dbReference type="UCSC" id="RGD:2500">
    <property type="organism name" value="rat"/>
</dbReference>
<dbReference type="AGR" id="RGD:2500"/>
<dbReference type="CTD" id="1719"/>
<dbReference type="RGD" id="2500">
    <property type="gene designation" value="Dhfr"/>
</dbReference>
<dbReference type="eggNOG" id="KOG1324">
    <property type="taxonomic scope" value="Eukaryota"/>
</dbReference>
<dbReference type="GeneTree" id="ENSGT00390000010283"/>
<dbReference type="HOGENOM" id="CLU_043966_2_3_1"/>
<dbReference type="InParanoid" id="Q920D2"/>
<dbReference type="OMA" id="RDNQLPW"/>
<dbReference type="OrthoDB" id="8880at9989"/>
<dbReference type="PhylomeDB" id="Q920D2"/>
<dbReference type="TreeFam" id="TF317636"/>
<dbReference type="BRENDA" id="1.5.1.3">
    <property type="organism ID" value="5301"/>
</dbReference>
<dbReference type="Reactome" id="R-RNO-196757">
    <property type="pathway name" value="Metabolism of folate and pterines"/>
</dbReference>
<dbReference type="SABIO-RK" id="Q920D2"/>
<dbReference type="UniPathway" id="UPA00077">
    <property type="reaction ID" value="UER00158"/>
</dbReference>
<dbReference type="PRO" id="PR:Q920D2"/>
<dbReference type="Proteomes" id="UP000002494">
    <property type="component" value="Chromosome 2"/>
</dbReference>
<dbReference type="Bgee" id="ENSRNOG00000013521">
    <property type="expression patterns" value="Expressed in duodenum and 19 other cell types or tissues"/>
</dbReference>
<dbReference type="ExpressionAtlas" id="Q920D2">
    <property type="expression patterns" value="baseline and differential"/>
</dbReference>
<dbReference type="GO" id="GO:0005737">
    <property type="term" value="C:cytoplasm"/>
    <property type="evidence" value="ECO:0000314"/>
    <property type="project" value="UniProtKB"/>
</dbReference>
<dbReference type="GO" id="GO:0005739">
    <property type="term" value="C:mitochondrion"/>
    <property type="evidence" value="ECO:0000314"/>
    <property type="project" value="UniProtKB"/>
</dbReference>
<dbReference type="GO" id="GO:0005634">
    <property type="term" value="C:nucleus"/>
    <property type="evidence" value="ECO:0000266"/>
    <property type="project" value="RGD"/>
</dbReference>
<dbReference type="GO" id="GO:0004146">
    <property type="term" value="F:dihydrofolate reductase activity"/>
    <property type="evidence" value="ECO:0000314"/>
    <property type="project" value="UniProtKB"/>
</dbReference>
<dbReference type="GO" id="GO:0051871">
    <property type="term" value="F:dihydrofolic acid binding"/>
    <property type="evidence" value="ECO:0000314"/>
    <property type="project" value="RGD"/>
</dbReference>
<dbReference type="GO" id="GO:0005542">
    <property type="term" value="F:folic acid binding"/>
    <property type="evidence" value="ECO:0000266"/>
    <property type="project" value="RGD"/>
</dbReference>
<dbReference type="GO" id="GO:0003729">
    <property type="term" value="F:mRNA binding"/>
    <property type="evidence" value="ECO:0000250"/>
    <property type="project" value="UniProtKB"/>
</dbReference>
<dbReference type="GO" id="GO:0000900">
    <property type="term" value="F:mRNA regulatory element binding translation repressor activity"/>
    <property type="evidence" value="ECO:0000266"/>
    <property type="project" value="RGD"/>
</dbReference>
<dbReference type="GO" id="GO:0050661">
    <property type="term" value="F:NADP binding"/>
    <property type="evidence" value="ECO:0000314"/>
    <property type="project" value="RGD"/>
</dbReference>
<dbReference type="GO" id="GO:0070402">
    <property type="term" value="F:NADPH binding"/>
    <property type="evidence" value="ECO:0000266"/>
    <property type="project" value="RGD"/>
</dbReference>
<dbReference type="GO" id="GO:1990825">
    <property type="term" value="F:sequence-specific mRNA binding"/>
    <property type="evidence" value="ECO:0000266"/>
    <property type="project" value="RGD"/>
</dbReference>
<dbReference type="GO" id="GO:0031103">
    <property type="term" value="P:axon regeneration"/>
    <property type="evidence" value="ECO:0000315"/>
    <property type="project" value="BHF-UCL"/>
</dbReference>
<dbReference type="GO" id="GO:0046452">
    <property type="term" value="P:dihydrofolate metabolic process"/>
    <property type="evidence" value="ECO:0000314"/>
    <property type="project" value="RGD"/>
</dbReference>
<dbReference type="GO" id="GO:0046655">
    <property type="term" value="P:folic acid metabolic process"/>
    <property type="evidence" value="ECO:0000314"/>
    <property type="project" value="BHF-UCL"/>
</dbReference>
<dbReference type="GO" id="GO:0017148">
    <property type="term" value="P:negative regulation of translation"/>
    <property type="evidence" value="ECO:0000266"/>
    <property type="project" value="RGD"/>
</dbReference>
<dbReference type="GO" id="GO:2000121">
    <property type="term" value="P:regulation of removal of superoxide radicals"/>
    <property type="evidence" value="ECO:0000266"/>
    <property type="project" value="RGD"/>
</dbReference>
<dbReference type="GO" id="GO:0031427">
    <property type="term" value="P:response to methotrexate"/>
    <property type="evidence" value="ECO:0007669"/>
    <property type="project" value="UniProtKB-KW"/>
</dbReference>
<dbReference type="GO" id="GO:0035094">
    <property type="term" value="P:response to nicotine"/>
    <property type="evidence" value="ECO:0000270"/>
    <property type="project" value="RGD"/>
</dbReference>
<dbReference type="GO" id="GO:0006729">
    <property type="term" value="P:tetrahydrobiopterin biosynthetic process"/>
    <property type="evidence" value="ECO:0000266"/>
    <property type="project" value="RGD"/>
</dbReference>
<dbReference type="GO" id="GO:0046654">
    <property type="term" value="P:tetrahydrofolate biosynthetic process"/>
    <property type="evidence" value="ECO:0000314"/>
    <property type="project" value="RGD"/>
</dbReference>
<dbReference type="GO" id="GO:0035999">
    <property type="term" value="P:tetrahydrofolate interconversion"/>
    <property type="evidence" value="ECO:0000266"/>
    <property type="project" value="RGD"/>
</dbReference>
<dbReference type="GO" id="GO:0046653">
    <property type="term" value="P:tetrahydrofolate metabolic process"/>
    <property type="evidence" value="ECO:0000250"/>
    <property type="project" value="UniProtKB"/>
</dbReference>
<dbReference type="CDD" id="cd00209">
    <property type="entry name" value="DHFR"/>
    <property type="match status" value="1"/>
</dbReference>
<dbReference type="FunFam" id="3.40.430.10:FF:000002">
    <property type="entry name" value="Dihydrofolate reductase"/>
    <property type="match status" value="1"/>
</dbReference>
<dbReference type="Gene3D" id="3.40.430.10">
    <property type="entry name" value="Dihydrofolate Reductase, subunit A"/>
    <property type="match status" value="1"/>
</dbReference>
<dbReference type="InterPro" id="IPR012259">
    <property type="entry name" value="DHFR"/>
</dbReference>
<dbReference type="InterPro" id="IPR024072">
    <property type="entry name" value="DHFR-like_dom_sf"/>
</dbReference>
<dbReference type="InterPro" id="IPR017925">
    <property type="entry name" value="DHFR_CS"/>
</dbReference>
<dbReference type="InterPro" id="IPR001796">
    <property type="entry name" value="DHFR_dom"/>
</dbReference>
<dbReference type="PANTHER" id="PTHR48069">
    <property type="entry name" value="DIHYDROFOLATE REDUCTASE"/>
    <property type="match status" value="1"/>
</dbReference>
<dbReference type="PANTHER" id="PTHR48069:SF6">
    <property type="entry name" value="DIHYDROFOLATE REDUCTASE"/>
    <property type="match status" value="1"/>
</dbReference>
<dbReference type="Pfam" id="PF00186">
    <property type="entry name" value="DHFR_1"/>
    <property type="match status" value="1"/>
</dbReference>
<dbReference type="PRINTS" id="PR00070">
    <property type="entry name" value="DHFR"/>
</dbReference>
<dbReference type="SUPFAM" id="SSF53597">
    <property type="entry name" value="Dihydrofolate reductase-like"/>
    <property type="match status" value="1"/>
</dbReference>
<dbReference type="PROSITE" id="PS00075">
    <property type="entry name" value="DHFR_1"/>
    <property type="match status" value="1"/>
</dbReference>
<dbReference type="PROSITE" id="PS51330">
    <property type="entry name" value="DHFR_2"/>
    <property type="match status" value="1"/>
</dbReference>
<proteinExistence type="evidence at protein level"/>
<accession>Q920D2</accession>
<feature type="chain" id="PRO_0000186366" description="Dihydrofolate reductase">
    <location>
        <begin position="1"/>
        <end position="187"/>
    </location>
</feature>
<feature type="domain" description="DHFR" evidence="3">
    <location>
        <begin position="4"/>
        <end position="185"/>
    </location>
</feature>
<feature type="binding site" evidence="1">
    <location>
        <position position="10"/>
    </location>
    <ligand>
        <name>NADP(+)</name>
        <dbReference type="ChEBI" id="CHEBI:58349"/>
    </ligand>
</feature>
<feature type="binding site" evidence="1">
    <location>
        <begin position="16"/>
        <end position="22"/>
    </location>
    <ligand>
        <name>NADP(+)</name>
        <dbReference type="ChEBI" id="CHEBI:58349"/>
    </ligand>
</feature>
<feature type="binding site" evidence="1">
    <location>
        <begin position="31"/>
        <end position="36"/>
    </location>
    <ligand>
        <name>substrate</name>
    </ligand>
</feature>
<feature type="binding site" evidence="1">
    <location>
        <begin position="55"/>
        <end position="57"/>
    </location>
    <ligand>
        <name>NADP(+)</name>
        <dbReference type="ChEBI" id="CHEBI:58349"/>
    </ligand>
</feature>
<feature type="binding site" evidence="1">
    <location>
        <position position="71"/>
    </location>
    <ligand>
        <name>substrate</name>
    </ligand>
</feature>
<feature type="binding site" evidence="1">
    <location>
        <begin position="77"/>
        <end position="79"/>
    </location>
    <ligand>
        <name>NADP(+)</name>
        <dbReference type="ChEBI" id="CHEBI:58349"/>
    </ligand>
</feature>
<feature type="binding site" evidence="1">
    <location>
        <begin position="117"/>
        <end position="124"/>
    </location>
    <ligand>
        <name>NADP(+)</name>
        <dbReference type="ChEBI" id="CHEBI:58349"/>
    </ligand>
</feature>
<feature type="modified residue" description="N6-acetyllysine; alternate" evidence="2">
    <location>
        <position position="33"/>
    </location>
</feature>
<feature type="modified residue" description="N6-succinyllysine; alternate" evidence="2">
    <location>
        <position position="33"/>
    </location>
</feature>
<sequence>MVRPLNCIVAVSQNMGIGKNGDLPWPLLRNEFKYFQRMTTTSSVEGKQNLVIMGRKTWFSIPEKNRPLKDRINIVLSRELKEPPQGAHFLAKSLDDALKLIEQPELASKVDMVWVVGGSSVYQEAMNQPGHLRLFVTRIMQEFESDTFFPEIDLEKYKLLPEYPGVLSEIQEEKGIKYKFEVYEKKD</sequence>